<dbReference type="EMBL" id="FM211187">
    <property type="protein sequence ID" value="CAR69359.1"/>
    <property type="molecule type" value="Genomic_DNA"/>
</dbReference>
<dbReference type="RefSeq" id="WP_000011276.1">
    <property type="nucleotide sequence ID" value="NC_011900.1"/>
</dbReference>
<dbReference type="SMR" id="B8ZLS6"/>
<dbReference type="GeneID" id="45653198"/>
<dbReference type="KEGG" id="sne:SPN23F15810"/>
<dbReference type="HOGENOM" id="CLU_053282_0_0_9"/>
<dbReference type="GO" id="GO:0003677">
    <property type="term" value="F:DNA binding"/>
    <property type="evidence" value="ECO:0007669"/>
    <property type="project" value="UniProtKB-UniRule"/>
</dbReference>
<dbReference type="GO" id="GO:0051301">
    <property type="term" value="P:cell division"/>
    <property type="evidence" value="ECO:0007669"/>
    <property type="project" value="UniProtKB-UniRule"/>
</dbReference>
<dbReference type="GO" id="GO:0043937">
    <property type="term" value="P:regulation of sporulation"/>
    <property type="evidence" value="ECO:0007669"/>
    <property type="project" value="InterPro"/>
</dbReference>
<dbReference type="FunFam" id="3.10.28.10:FF:000004">
    <property type="entry name" value="Probable cell division protein WhiA"/>
    <property type="match status" value="1"/>
</dbReference>
<dbReference type="Gene3D" id="3.10.28.10">
    <property type="entry name" value="Homing endonucleases"/>
    <property type="match status" value="1"/>
</dbReference>
<dbReference type="HAMAP" id="MF_01420">
    <property type="entry name" value="HTH_type_WhiA"/>
    <property type="match status" value="1"/>
</dbReference>
<dbReference type="InterPro" id="IPR027434">
    <property type="entry name" value="Homing_endonucl"/>
</dbReference>
<dbReference type="InterPro" id="IPR018478">
    <property type="entry name" value="Sporu_reg_WhiA_N_dom"/>
</dbReference>
<dbReference type="InterPro" id="IPR003802">
    <property type="entry name" value="Sporulation_regulator_WhiA"/>
</dbReference>
<dbReference type="InterPro" id="IPR023054">
    <property type="entry name" value="Sporulation_regulator_WhiA_C"/>
</dbReference>
<dbReference type="InterPro" id="IPR039518">
    <property type="entry name" value="WhiA_LAGLIDADG_dom"/>
</dbReference>
<dbReference type="NCBIfam" id="TIGR00647">
    <property type="entry name" value="DNA_bind_WhiA"/>
    <property type="match status" value="1"/>
</dbReference>
<dbReference type="PANTHER" id="PTHR37307">
    <property type="entry name" value="CELL DIVISION PROTEIN WHIA-RELATED"/>
    <property type="match status" value="1"/>
</dbReference>
<dbReference type="PANTHER" id="PTHR37307:SF1">
    <property type="entry name" value="CELL DIVISION PROTEIN WHIA-RELATED"/>
    <property type="match status" value="1"/>
</dbReference>
<dbReference type="Pfam" id="PF02650">
    <property type="entry name" value="HTH_WhiA"/>
    <property type="match status" value="1"/>
</dbReference>
<dbReference type="Pfam" id="PF14527">
    <property type="entry name" value="LAGLIDADG_WhiA"/>
    <property type="match status" value="1"/>
</dbReference>
<dbReference type="Pfam" id="PF10298">
    <property type="entry name" value="WhiA_N"/>
    <property type="match status" value="1"/>
</dbReference>
<dbReference type="SUPFAM" id="SSF55608">
    <property type="entry name" value="Homing endonucleases"/>
    <property type="match status" value="1"/>
</dbReference>
<reference key="1">
    <citation type="journal article" date="2009" name="J. Bacteriol.">
        <title>Role of conjugative elements in the evolution of the multidrug-resistant pandemic clone Streptococcus pneumoniae Spain23F ST81.</title>
        <authorList>
            <person name="Croucher N.J."/>
            <person name="Walker D."/>
            <person name="Romero P."/>
            <person name="Lennard N."/>
            <person name="Paterson G.K."/>
            <person name="Bason N.C."/>
            <person name="Mitchell A.M."/>
            <person name="Quail M.A."/>
            <person name="Andrew P.W."/>
            <person name="Parkhill J."/>
            <person name="Bentley S.D."/>
            <person name="Mitchell T.J."/>
        </authorList>
    </citation>
    <scope>NUCLEOTIDE SEQUENCE [LARGE SCALE GENOMIC DNA]</scope>
    <source>
        <strain>ATCC 700669 / Spain 23F-1</strain>
    </source>
</reference>
<comment type="function">
    <text evidence="1">Involved in cell division and chromosome segregation.</text>
</comment>
<comment type="similarity">
    <text evidence="1">Belongs to the WhiA family.</text>
</comment>
<gene>
    <name evidence="1" type="primary">whiA</name>
    <name type="ordered locus">SPN23F15810</name>
</gene>
<proteinExistence type="inferred from homology"/>
<name>WHIA_STRPJ</name>
<sequence>MSFTVAVKEEILGQHHLSRHELSAIIKMSGSIGLSTSGLTLSVVTENAKLARHLYESFLHFYEIKSEIRHHQRSNLRKNRVYTVFTDEKVQDLLSDLHLADSFFGLETGIDEAILSDEEAGRAYLCGAFLANGSIRDPESGKYQLEISSVYLDHAQGIASLLQQFLLDAKVLERKKGAVTYLQRAEDIMDFLIVIGAMQARDDFERVKILRETRNDLNRANNAETANIARTVSASMKTINNISKIKDIMGLENLPVDLQEVAQLRIQHPDYSIQQLADSLSTPLTKSGVNHRLRKINKIADEL</sequence>
<feature type="chain" id="PRO_0000376577" description="Probable cell division protein WhiA">
    <location>
        <begin position="1"/>
        <end position="303"/>
    </location>
</feature>
<feature type="DNA-binding region" description="H-T-H motif" evidence="1">
    <location>
        <begin position="272"/>
        <end position="303"/>
    </location>
</feature>
<evidence type="ECO:0000255" key="1">
    <source>
        <dbReference type="HAMAP-Rule" id="MF_01420"/>
    </source>
</evidence>
<accession>B8ZLS6</accession>
<keyword id="KW-0131">Cell cycle</keyword>
<keyword id="KW-0132">Cell division</keyword>
<keyword id="KW-0238">DNA-binding</keyword>
<organism>
    <name type="scientific">Streptococcus pneumoniae (strain ATCC 700669 / Spain 23F-1)</name>
    <dbReference type="NCBI Taxonomy" id="561276"/>
    <lineage>
        <taxon>Bacteria</taxon>
        <taxon>Bacillati</taxon>
        <taxon>Bacillota</taxon>
        <taxon>Bacilli</taxon>
        <taxon>Lactobacillales</taxon>
        <taxon>Streptococcaceae</taxon>
        <taxon>Streptococcus</taxon>
    </lineage>
</organism>
<protein>
    <recommendedName>
        <fullName evidence="1">Probable cell division protein WhiA</fullName>
    </recommendedName>
</protein>